<reference key="1">
    <citation type="journal article" date="1997" name="J. Fish Biol.">
        <title>Opsin sequences of the rod visual pigments in two species of Poeciliid fish.</title>
        <authorList>
            <person name="Archer S.N."/>
            <person name="Hirano J."/>
        </authorList>
    </citation>
    <scope>NUCLEOTIDE SEQUENCE [MRNA]</scope>
    <source>
        <tissue>Retina</tissue>
    </source>
</reference>
<protein>
    <recommendedName>
        <fullName>Rhodopsin</fullName>
    </recommendedName>
</protein>
<name>OPSD_POERE</name>
<organism>
    <name type="scientific">Poecilia reticulata</name>
    <name type="common">Guppy</name>
    <name type="synonym">Acanthophacelus reticulatus</name>
    <dbReference type="NCBI Taxonomy" id="8081"/>
    <lineage>
        <taxon>Eukaryota</taxon>
        <taxon>Metazoa</taxon>
        <taxon>Chordata</taxon>
        <taxon>Craniata</taxon>
        <taxon>Vertebrata</taxon>
        <taxon>Euteleostomi</taxon>
        <taxon>Actinopterygii</taxon>
        <taxon>Neopterygii</taxon>
        <taxon>Teleostei</taxon>
        <taxon>Neoteleostei</taxon>
        <taxon>Acanthomorphata</taxon>
        <taxon>Ovalentaria</taxon>
        <taxon>Atherinomorphae</taxon>
        <taxon>Cyprinodontiformes</taxon>
        <taxon>Poeciliidae</taxon>
        <taxon>Poeciliinae</taxon>
        <taxon>Poecilia</taxon>
    </lineage>
</organism>
<evidence type="ECO:0000250" key="1"/>
<evidence type="ECO:0000250" key="2">
    <source>
        <dbReference type="UniProtKB" id="P02699"/>
    </source>
</evidence>
<evidence type="ECO:0000250" key="3">
    <source>
        <dbReference type="UniProtKB" id="P08100"/>
    </source>
</evidence>
<evidence type="ECO:0000250" key="4">
    <source>
        <dbReference type="UniProtKB" id="P32309"/>
    </source>
</evidence>
<evidence type="ECO:0000250" key="5">
    <source>
        <dbReference type="UniProtKB" id="P35359"/>
    </source>
</evidence>
<evidence type="ECO:0000255" key="6"/>
<evidence type="ECO:0000255" key="7">
    <source>
        <dbReference type="PROSITE-ProRule" id="PRU00521"/>
    </source>
</evidence>
<evidence type="ECO:0000256" key="8">
    <source>
        <dbReference type="SAM" id="MobiDB-lite"/>
    </source>
</evidence>
<dbReference type="EMBL" id="Y11147">
    <property type="protein sequence ID" value="CAA72034.1"/>
    <property type="molecule type" value="mRNA"/>
</dbReference>
<dbReference type="SMR" id="P79848"/>
<dbReference type="STRING" id="8081.ENSPREP00000024057"/>
<dbReference type="GlyCosmos" id="P79848">
    <property type="glycosylation" value="2 sites, No reported glycans"/>
</dbReference>
<dbReference type="Proteomes" id="UP000242638">
    <property type="component" value="Unassembled WGS sequence"/>
</dbReference>
<dbReference type="GO" id="GO:0016020">
    <property type="term" value="C:membrane"/>
    <property type="evidence" value="ECO:0000250"/>
    <property type="project" value="UniProtKB"/>
</dbReference>
<dbReference type="GO" id="GO:0097381">
    <property type="term" value="C:photoreceptor disc membrane"/>
    <property type="evidence" value="ECO:0000250"/>
    <property type="project" value="UniProtKB"/>
</dbReference>
<dbReference type="GO" id="GO:0005886">
    <property type="term" value="C:plasma membrane"/>
    <property type="evidence" value="ECO:0000250"/>
    <property type="project" value="UniProtKB"/>
</dbReference>
<dbReference type="GO" id="GO:0005502">
    <property type="term" value="F:11-cis retinal binding"/>
    <property type="evidence" value="ECO:0000250"/>
    <property type="project" value="UniProtKB"/>
</dbReference>
<dbReference type="GO" id="GO:0008020">
    <property type="term" value="F:G protein-coupled photoreceptor activity"/>
    <property type="evidence" value="ECO:0000250"/>
    <property type="project" value="UniProtKB"/>
</dbReference>
<dbReference type="GO" id="GO:0016038">
    <property type="term" value="P:absorption of visible light"/>
    <property type="evidence" value="ECO:0000250"/>
    <property type="project" value="UniProtKB"/>
</dbReference>
<dbReference type="GO" id="GO:0016056">
    <property type="term" value="P:G protein-coupled opsin signaling pathway"/>
    <property type="evidence" value="ECO:0000250"/>
    <property type="project" value="UniProtKB"/>
</dbReference>
<dbReference type="GO" id="GO:0007601">
    <property type="term" value="P:visual perception"/>
    <property type="evidence" value="ECO:0007669"/>
    <property type="project" value="UniProtKB-KW"/>
</dbReference>
<dbReference type="CDD" id="cd15080">
    <property type="entry name" value="7tmA_MWS_opsin"/>
    <property type="match status" value="1"/>
</dbReference>
<dbReference type="FunFam" id="1.20.1070.10:FF:000018">
    <property type="entry name" value="Rhodopsin"/>
    <property type="match status" value="1"/>
</dbReference>
<dbReference type="Gene3D" id="1.20.1070.10">
    <property type="entry name" value="Rhodopsin 7-helix transmembrane proteins"/>
    <property type="match status" value="1"/>
</dbReference>
<dbReference type="InterPro" id="IPR050125">
    <property type="entry name" value="GPCR_opsins"/>
</dbReference>
<dbReference type="InterPro" id="IPR000276">
    <property type="entry name" value="GPCR_Rhodpsn"/>
</dbReference>
<dbReference type="InterPro" id="IPR017452">
    <property type="entry name" value="GPCR_Rhodpsn_7TM"/>
</dbReference>
<dbReference type="InterPro" id="IPR001760">
    <property type="entry name" value="Opsin"/>
</dbReference>
<dbReference type="InterPro" id="IPR027430">
    <property type="entry name" value="Retinal_BS"/>
</dbReference>
<dbReference type="InterPro" id="IPR000732">
    <property type="entry name" value="Rhodopsin"/>
</dbReference>
<dbReference type="InterPro" id="IPR019477">
    <property type="entry name" value="Rhodopsin_N"/>
</dbReference>
<dbReference type="PANTHER" id="PTHR24240">
    <property type="entry name" value="OPSIN"/>
    <property type="match status" value="1"/>
</dbReference>
<dbReference type="Pfam" id="PF00001">
    <property type="entry name" value="7tm_1"/>
    <property type="match status" value="1"/>
</dbReference>
<dbReference type="Pfam" id="PF10413">
    <property type="entry name" value="Rhodopsin_N"/>
    <property type="match status" value="1"/>
</dbReference>
<dbReference type="PRINTS" id="PR00237">
    <property type="entry name" value="GPCRRHODOPSN"/>
</dbReference>
<dbReference type="PRINTS" id="PR00238">
    <property type="entry name" value="OPSIN"/>
</dbReference>
<dbReference type="PRINTS" id="PR00579">
    <property type="entry name" value="RHODOPSIN"/>
</dbReference>
<dbReference type="SUPFAM" id="SSF81321">
    <property type="entry name" value="Family A G protein-coupled receptor-like"/>
    <property type="match status" value="1"/>
</dbReference>
<dbReference type="PROSITE" id="PS00237">
    <property type="entry name" value="G_PROTEIN_RECEP_F1_1"/>
    <property type="match status" value="1"/>
</dbReference>
<dbReference type="PROSITE" id="PS50262">
    <property type="entry name" value="G_PROTEIN_RECEP_F1_2"/>
    <property type="match status" value="1"/>
</dbReference>
<dbReference type="PROSITE" id="PS00238">
    <property type="entry name" value="OPSIN"/>
    <property type="match status" value="1"/>
</dbReference>
<keyword id="KW-0966">Cell projection</keyword>
<keyword id="KW-0157">Chromophore</keyword>
<keyword id="KW-1015">Disulfide bond</keyword>
<keyword id="KW-0297">G-protein coupled receptor</keyword>
<keyword id="KW-0325">Glycoprotein</keyword>
<keyword id="KW-0449">Lipoprotein</keyword>
<keyword id="KW-0472">Membrane</keyword>
<keyword id="KW-0564">Palmitate</keyword>
<keyword id="KW-0597">Phosphoprotein</keyword>
<keyword id="KW-0600">Photoreceptor protein</keyword>
<keyword id="KW-0675">Receptor</keyword>
<keyword id="KW-1185">Reference proteome</keyword>
<keyword id="KW-0681">Retinal protein</keyword>
<keyword id="KW-0716">Sensory transduction</keyword>
<keyword id="KW-0807">Transducer</keyword>
<keyword id="KW-0812">Transmembrane</keyword>
<keyword id="KW-1133">Transmembrane helix</keyword>
<keyword id="KW-0844">Vision</keyword>
<proteinExistence type="evidence at transcript level"/>
<comment type="function">
    <text evidence="2 3 4">Photoreceptor required for image-forming vision at low light intensity. While most salt water fish species use retinal as chromophore, most freshwater fish use 3-dehydroretinal, or a mixture of retinal and 3-dehydroretinal (By similarity). Light-induced isomerization of 11-cis to all-trans retinal triggers a conformational change that activates signaling via G-proteins. Subsequent receptor phosphorylation mediates displacement of the bound G-protein alpha subunit by arrestin and terminates signaling (By similarity).</text>
</comment>
<comment type="subcellular location">
    <subcellularLocation>
        <location evidence="3">Membrane</location>
        <topology evidence="3">Multi-pass membrane protein</topology>
    </subcellularLocation>
    <subcellularLocation>
        <location evidence="5">Cell projection</location>
        <location evidence="5">Cilium</location>
        <location evidence="5">Photoreceptor outer segment</location>
    </subcellularLocation>
    <text evidence="3">Synthesized in the inner segment (IS) of rod photoreceptor cells before vectorial transport to disk membranes in the rod outer segment (OS) photosensory cilia.</text>
</comment>
<comment type="PTM">
    <text evidence="2">Phosphorylated on some or all of the serine and threonine residues present in the C-terminal region.</text>
</comment>
<comment type="PTM">
    <text evidence="2">Contains one covalently linked retinal chromophore.</text>
</comment>
<comment type="similarity">
    <text evidence="7">Belongs to the G-protein coupled receptor 1 family. Opsin subfamily.</text>
</comment>
<gene>
    <name type="primary">rho</name>
</gene>
<feature type="chain" id="PRO_0000197700" description="Rhodopsin">
    <location>
        <begin position="1"/>
        <end position="354"/>
    </location>
</feature>
<feature type="topological domain" description="Extracellular" evidence="2">
    <location>
        <begin position="1"/>
        <end position="36"/>
    </location>
</feature>
<feature type="transmembrane region" description="Helical; Name=1" evidence="2">
    <location>
        <begin position="37"/>
        <end position="61"/>
    </location>
</feature>
<feature type="topological domain" description="Cytoplasmic" evidence="2">
    <location>
        <begin position="62"/>
        <end position="73"/>
    </location>
</feature>
<feature type="transmembrane region" description="Helical; Name=2" evidence="2">
    <location>
        <begin position="74"/>
        <end position="96"/>
    </location>
</feature>
<feature type="topological domain" description="Extracellular" evidence="2">
    <location>
        <begin position="97"/>
        <end position="110"/>
    </location>
</feature>
<feature type="transmembrane region" description="Helical; Name=3" evidence="2">
    <location>
        <begin position="111"/>
        <end position="133"/>
    </location>
</feature>
<feature type="topological domain" description="Cytoplasmic" evidence="2">
    <location>
        <begin position="134"/>
        <end position="152"/>
    </location>
</feature>
<feature type="transmembrane region" description="Helical; Name=4" evidence="2">
    <location>
        <begin position="153"/>
        <end position="173"/>
    </location>
</feature>
<feature type="topological domain" description="Extracellular" evidence="2">
    <location>
        <begin position="174"/>
        <end position="202"/>
    </location>
</feature>
<feature type="transmembrane region" description="Helical; Name=5" evidence="2">
    <location>
        <begin position="203"/>
        <end position="224"/>
    </location>
</feature>
<feature type="topological domain" description="Cytoplasmic" evidence="6">
    <location>
        <begin position="225"/>
        <end position="252"/>
    </location>
</feature>
<feature type="transmembrane region" description="Helical; Name=6" evidence="2">
    <location>
        <begin position="253"/>
        <end position="274"/>
    </location>
</feature>
<feature type="topological domain" description="Extracellular" evidence="2">
    <location>
        <begin position="275"/>
        <end position="286"/>
    </location>
</feature>
<feature type="transmembrane region" description="Helical; Name=7" evidence="2">
    <location>
        <begin position="287"/>
        <end position="308"/>
    </location>
</feature>
<feature type="topological domain" description="Cytoplasmic" evidence="2">
    <location>
        <begin position="309"/>
        <end position="354"/>
    </location>
</feature>
<feature type="region of interest" description="Disordered" evidence="8">
    <location>
        <begin position="333"/>
        <end position="354"/>
    </location>
</feature>
<feature type="short sequence motif" description="'Ionic lock' involved in activated form stabilization" evidence="2">
    <location>
        <begin position="134"/>
        <end position="136"/>
    </location>
</feature>
<feature type="compositionally biased region" description="Low complexity" evidence="8">
    <location>
        <begin position="334"/>
        <end position="354"/>
    </location>
</feature>
<feature type="site" description="Plays an important role in the conformation switch to the active conformation" evidence="2">
    <location>
        <position position="113"/>
    </location>
</feature>
<feature type="modified residue" description="N6-(retinylidene)lysine" evidence="2">
    <location>
        <position position="296"/>
    </location>
</feature>
<feature type="lipid moiety-binding region" description="S-palmitoyl cysteine" evidence="2">
    <location>
        <position position="322"/>
    </location>
</feature>
<feature type="lipid moiety-binding region" description="S-palmitoyl cysteine" evidence="2">
    <location>
        <position position="323"/>
    </location>
</feature>
<feature type="glycosylation site" description="N-linked (GlcNAc...) asparagine" evidence="1">
    <location>
        <position position="2"/>
    </location>
</feature>
<feature type="glycosylation site" description="N-linked (GlcNAc...) asparagine" evidence="1">
    <location>
        <position position="15"/>
    </location>
</feature>
<feature type="disulfide bond" evidence="7">
    <location>
        <begin position="110"/>
        <end position="187"/>
    </location>
</feature>
<accession>P79848</accession>
<sequence length="354" mass="39693">MNGTEGPYFYVPMVNTTGIVRSPYEYPQYYLVSPAAYACLGAYMFFLILVGFPINFLTLYVTIEHKKLRTPLNYILLNLAVADLFMVFGGFTTTIYTSMHGYFVLGRLGCNLEGYFATLGGEIGLWSLVVLAVERWLVVCKPISNFRFSENHAIMGLVFTWIMANSCAAPPLLGWSRYIPEGMQCSCGVDYYTRAEGFNNESFVIYMFICHFCIPLIVVFFCYGRLLCAVKEAAAAQQESETTQRAEREVTRMVVIMVIGFLVCWIPYASVAWYIFTHQGSEFGPLFMTVPAFFAKSASIYNPLIYICMNKQFRHCMITTLCCGKNPFEEEEGASTTASKTEASSVSSSSVSPA</sequence>